<feature type="initiator methionine" description="Removed" evidence="2">
    <location>
        <position position="1"/>
    </location>
</feature>
<feature type="chain" id="PRO_0000403688" description="4-hydroxyphenylacetate decarboxylase glycyl radical subunit" evidence="2">
    <location>
        <begin position="2"/>
        <end position="902"/>
    </location>
</feature>
<feature type="domain" description="PFL" evidence="4">
    <location>
        <begin position="38"/>
        <end position="774"/>
    </location>
</feature>
<feature type="domain" description="Glycine radical" evidence="3">
    <location>
        <begin position="782"/>
        <end position="902"/>
    </location>
</feature>
<feature type="active site" description="Cysteine radical intermediate" evidence="1">
    <location>
        <position position="507"/>
    </location>
</feature>
<feature type="active site" description="Proton donor" evidence="1">
    <location>
        <position position="509"/>
    </location>
</feature>
<feature type="binding site" evidence="1">
    <location>
        <position position="348"/>
    </location>
    <ligand>
        <name>4-hydroxyphenylacetate</name>
        <dbReference type="ChEBI" id="CHEBI:48999"/>
    </ligand>
</feature>
<feature type="binding site" evidence="1">
    <location>
        <position position="507"/>
    </location>
    <ligand>
        <name>4-hydroxyphenylacetate</name>
        <dbReference type="ChEBI" id="CHEBI:48999"/>
    </ligand>
</feature>
<feature type="binding site" evidence="1">
    <location>
        <position position="540"/>
    </location>
    <ligand>
        <name>4-hydroxyphenylacetate</name>
        <dbReference type="ChEBI" id="CHEBI:48999"/>
    </ligand>
</feature>
<feature type="binding site" evidence="1">
    <location>
        <position position="641"/>
    </location>
    <ligand>
        <name>4-hydroxyphenylacetate</name>
        <dbReference type="ChEBI" id="CHEBI:48999"/>
    </ligand>
</feature>
<feature type="modified residue" description="Glycine radical" evidence="3">
    <location>
        <position position="877"/>
    </location>
</feature>
<accession>Q18CP5</accession>
<protein>
    <recommendedName>
        <fullName evidence="1">4-hydroxyphenylacetate decarboxylase glycyl radical subunit</fullName>
        <shortName evidence="1">HPA decarboxylase glycyl radical subunit</shortName>
        <ecNumber evidence="1">4.1.1.83</ecNumber>
    </recommendedName>
    <alternativeName>
        <fullName evidence="1">4-hydroxyphenylacetate decarboxylase catalytic beta subunit</fullName>
    </alternativeName>
    <alternativeName>
        <fullName evidence="1">4-hydroxyphenylacetate decarboxylase large subunit</fullName>
    </alternativeName>
    <alternativeName>
        <fullName evidence="1">p-hydroxyphenylacetate decarboxylase large subunit</fullName>
    </alternativeName>
</protein>
<sequence length="902" mass="101294">MSQSKEDKIRSILEAKNIKSNFQNKENLSEFNEKKASKRAEDLLDVYYNTLSTADMEFPYWYNREYRKSDGDIPVVRRAKALKAAFSHMTPNIIPGEKIVMQKTRHYRGSFPMPWVSESFFVAQGEQMREEAKKLASNTADELTKFGSGGGNVTESFGNVVSIAGKFGMRKEEVPVLVKMAKEWVGKSVEDLGFHYEKMMPDYDLKENLMSTLICMFDSGYTLPQGREVINYFYPLNYGLDGIIEMAKECKKAVAGNASGDGLIGMDRLYFYEAVIQVIEGLQTWILNYAKHAKYLESIETDLEAKKEYSDLVEILEHIAHKQPRTFREALQLTYTIHIASVNEDAISGMSIGRFGQILYPWYEQDIEKGLITKEEVIELLELYRIKITCIDCFASAGVNGGVLSGNTFNTLSIGGLKEDGSTGANELEELLLEASMRCRTPQPSLTMLYDEKLPEDFLMKAAECTKLGSGYPAWVNNSNGTTFMMKQFADEGMTVEEARAFALGGCLETSPGCWKQLTLNGKTYSIAGGAGQSAGSGVHFIANPKILELVLMNGKDYRMNIQVFEPHNKPLDTYEEVIEVFKDYYKQAINVLERANNIELDIWRKFDTSIINSLLKPDCLDKGQHIGNMGYRYNATLNVETCGTVTMVNSFAALKKLVYDDKAFTIEEMKDAILNNFGFKDALEVGNYSMADQVKVDKTGKYDAIYKACLDAPKYGNNDLYADNILKNYEVWLSKVCEEAQSLYAKKMYPCQISVSTHGPQGAATLATPDGRLSGTTYSDGSVSAYAGTDKNGVYALFESATIWDQAVVQNSQMNLKLHPTTIKGQQGTKKLLDLTRSYLRKGGFHIQYNVVDSETLKDAQKNPDNYRQLMVRVAGFTQYWCELGKPIQDEVIARTEYEGV</sequence>
<reference key="1">
    <citation type="journal article" date="2006" name="Nat. Genet.">
        <title>The multidrug-resistant human pathogen Clostridium difficile has a highly mobile, mosaic genome.</title>
        <authorList>
            <person name="Sebaihia M."/>
            <person name="Wren B.W."/>
            <person name="Mullany P."/>
            <person name="Fairweather N.F."/>
            <person name="Minton N."/>
            <person name="Stabler R."/>
            <person name="Thomson N.R."/>
            <person name="Roberts A.P."/>
            <person name="Cerdeno-Tarraga A.M."/>
            <person name="Wang H."/>
            <person name="Holden M.T.G."/>
            <person name="Wright A."/>
            <person name="Churcher C."/>
            <person name="Quail M.A."/>
            <person name="Baker S."/>
            <person name="Bason N."/>
            <person name="Brooks K."/>
            <person name="Chillingworth T."/>
            <person name="Cronin A."/>
            <person name="Davis P."/>
            <person name="Dowd L."/>
            <person name="Fraser A."/>
            <person name="Feltwell T."/>
            <person name="Hance Z."/>
            <person name="Holroyd S."/>
            <person name="Jagels K."/>
            <person name="Moule S."/>
            <person name="Mungall K."/>
            <person name="Price C."/>
            <person name="Rabbinowitsch E."/>
            <person name="Sharp S."/>
            <person name="Simmonds M."/>
            <person name="Stevens K."/>
            <person name="Unwin L."/>
            <person name="Whithead S."/>
            <person name="Dupuy B."/>
            <person name="Dougan G."/>
            <person name="Barrell B."/>
            <person name="Parkhill J."/>
        </authorList>
    </citation>
    <scope>NUCLEOTIDE SEQUENCE [LARGE SCALE GENOMIC DNA]</scope>
    <source>
        <strain>630</strain>
    </source>
</reference>
<name>HPDL_CLOD6</name>
<keyword id="KW-0456">Lyase</keyword>
<keyword id="KW-0556">Organic radical</keyword>
<keyword id="KW-0597">Phosphoprotein</keyword>
<keyword id="KW-1185">Reference proteome</keyword>
<comment type="function">
    <text evidence="1">Glycyl radical subunit of the HPA decarboxylase that decarboxylates phenylacetates with a hydroxyl group in the p-position. Active toward 4-hydroxyphenylacetate and 3,4-dihydroxyphenylacetate, forming 4-methylphenol and 4-methylcatechol, respectively. Is likely involved in the catabolism of aromatic amino acids such as tyrosine fermentation. 4-methylphenol (p-cresol) formation provides metabolic toxicity, which allows an active suppression of other microbes and may provide growth advantages for the producers in highly competitive environments. The large subunit is the catalytic subunit that binds the substrate.</text>
</comment>
<comment type="catalytic activity">
    <reaction evidence="1">
        <text>4-hydroxyphenylacetate + H(+) = 4-methylphenol + CO2</text>
        <dbReference type="Rhea" id="RHEA:22732"/>
        <dbReference type="ChEBI" id="CHEBI:15378"/>
        <dbReference type="ChEBI" id="CHEBI:16526"/>
        <dbReference type="ChEBI" id="CHEBI:17847"/>
        <dbReference type="ChEBI" id="CHEBI:48999"/>
        <dbReference type="EC" id="4.1.1.83"/>
    </reaction>
    <physiologicalReaction direction="left-to-right" evidence="1">
        <dbReference type="Rhea" id="RHEA:22733"/>
    </physiologicalReaction>
</comment>
<comment type="catalytic activity">
    <reaction evidence="1">
        <text>3,4-dihydroxyphenylacetate + H(+) = 4-methylcatechol + CO2</text>
        <dbReference type="Rhea" id="RHEA:62556"/>
        <dbReference type="ChEBI" id="CHEBI:15378"/>
        <dbReference type="ChEBI" id="CHEBI:16526"/>
        <dbReference type="ChEBI" id="CHEBI:17254"/>
        <dbReference type="ChEBI" id="CHEBI:17612"/>
        <dbReference type="EC" id="4.1.1.83"/>
    </reaction>
    <physiologicalReaction direction="left-to-right" evidence="1">
        <dbReference type="Rhea" id="RHEA:62557"/>
    </physiologicalReaction>
</comment>
<comment type="subunit">
    <text evidence="1">Heterooctamer consisting of 4 large (HpdB) subunits and 4 small (HpdC) subunits, arranged as a tetramer of heterodimers. Also forms a catalytically inactive homodimer.</text>
</comment>
<comment type="PTM">
    <text evidence="1">Requires the activating protein CsdA to generate the key active site glycyl radical that is involved in catalysis.</text>
</comment>
<comment type="PTM">
    <text evidence="1">Phosphorylated on serine. Phosphorylation may trigger the formation of the active heterooctamers and thereby regulates enzyme activity.</text>
</comment>
<comment type="similarity">
    <text evidence="5">Belongs to the glycyl radical enzyme (GRE) family. HPAD subfamily.</text>
</comment>
<proteinExistence type="inferred from homology"/>
<dbReference type="EC" id="4.1.1.83" evidence="1"/>
<dbReference type="EMBL" id="AM180355">
    <property type="protein sequence ID" value="CAJ66973.1"/>
    <property type="molecule type" value="Genomic_DNA"/>
</dbReference>
<dbReference type="RefSeq" id="WP_009901609.1">
    <property type="nucleotide sequence ID" value="NZ_JAUPES010000004.1"/>
</dbReference>
<dbReference type="RefSeq" id="YP_001086622.1">
    <property type="nucleotide sequence ID" value="NC_009089.1"/>
</dbReference>
<dbReference type="SMR" id="Q18CP5"/>
<dbReference type="STRING" id="272563.CD630_01530"/>
<dbReference type="EnsemblBacteria" id="CAJ66973">
    <property type="protein sequence ID" value="CAJ66973"/>
    <property type="gene ID" value="CD630_01530"/>
</dbReference>
<dbReference type="GeneID" id="66352700"/>
<dbReference type="KEGG" id="cdf:CD630_01530"/>
<dbReference type="KEGG" id="pdc:CDIF630_00272"/>
<dbReference type="PATRIC" id="fig|272563.120.peg.166"/>
<dbReference type="eggNOG" id="COG1882">
    <property type="taxonomic scope" value="Bacteria"/>
</dbReference>
<dbReference type="OrthoDB" id="9803969at2"/>
<dbReference type="PhylomeDB" id="Q18CP5"/>
<dbReference type="BioCyc" id="PDIF272563:G12WB-257-MONOMER"/>
<dbReference type="Proteomes" id="UP000001978">
    <property type="component" value="Chromosome"/>
</dbReference>
<dbReference type="GO" id="GO:0005829">
    <property type="term" value="C:cytosol"/>
    <property type="evidence" value="ECO:0007669"/>
    <property type="project" value="TreeGrafter"/>
</dbReference>
<dbReference type="GO" id="GO:0043722">
    <property type="term" value="F:4-hydroxyphenylacetate decarboxylase activity"/>
    <property type="evidence" value="ECO:0007669"/>
    <property type="project" value="UniProtKB-EC"/>
</dbReference>
<dbReference type="Gene3D" id="3.20.70.20">
    <property type="match status" value="1"/>
</dbReference>
<dbReference type="InterPro" id="IPR001150">
    <property type="entry name" value="Gly_radical"/>
</dbReference>
<dbReference type="InterPro" id="IPR051215">
    <property type="entry name" value="GRE"/>
</dbReference>
<dbReference type="InterPro" id="IPR004184">
    <property type="entry name" value="PFL_dom"/>
</dbReference>
<dbReference type="NCBIfam" id="NF033715">
    <property type="entry name" value="glycyl_HPDL_Lrg"/>
    <property type="match status" value="1"/>
</dbReference>
<dbReference type="PANTHER" id="PTHR43641:SF2">
    <property type="entry name" value="DEHYDRATASE YBIW-RELATED"/>
    <property type="match status" value="1"/>
</dbReference>
<dbReference type="PANTHER" id="PTHR43641">
    <property type="entry name" value="FORMATE ACETYLTRANSFERASE 3-RELATED"/>
    <property type="match status" value="1"/>
</dbReference>
<dbReference type="Pfam" id="PF01228">
    <property type="entry name" value="Gly_radical"/>
    <property type="match status" value="1"/>
</dbReference>
<dbReference type="Pfam" id="PF02901">
    <property type="entry name" value="PFL-like"/>
    <property type="match status" value="1"/>
</dbReference>
<dbReference type="SUPFAM" id="SSF51998">
    <property type="entry name" value="PFL-like glycyl radical enzymes"/>
    <property type="match status" value="1"/>
</dbReference>
<dbReference type="PROSITE" id="PS51149">
    <property type="entry name" value="GLY_RADICAL_2"/>
    <property type="match status" value="1"/>
</dbReference>
<dbReference type="PROSITE" id="PS51554">
    <property type="entry name" value="PFL"/>
    <property type="match status" value="1"/>
</dbReference>
<evidence type="ECO:0000250" key="1">
    <source>
        <dbReference type="UniProtKB" id="Q38HX4"/>
    </source>
</evidence>
<evidence type="ECO:0000250" key="2">
    <source>
        <dbReference type="UniProtKB" id="Q84F16"/>
    </source>
</evidence>
<evidence type="ECO:0000255" key="3">
    <source>
        <dbReference type="PROSITE-ProRule" id="PRU00493"/>
    </source>
</evidence>
<evidence type="ECO:0000255" key="4">
    <source>
        <dbReference type="PROSITE-ProRule" id="PRU00887"/>
    </source>
</evidence>
<evidence type="ECO:0000305" key="5"/>
<evidence type="ECO:0000312" key="6">
    <source>
        <dbReference type="EMBL" id="CAJ66973.1"/>
    </source>
</evidence>
<gene>
    <name evidence="6" type="primary">hpdB</name>
    <name type="ordered locus">CD630_01530</name>
</gene>
<organism>
    <name type="scientific">Clostridioides difficile (strain 630)</name>
    <name type="common">Peptoclostridium difficile</name>
    <dbReference type="NCBI Taxonomy" id="272563"/>
    <lineage>
        <taxon>Bacteria</taxon>
        <taxon>Bacillati</taxon>
        <taxon>Bacillota</taxon>
        <taxon>Clostridia</taxon>
        <taxon>Peptostreptococcales</taxon>
        <taxon>Peptostreptococcaceae</taxon>
        <taxon>Clostridioides</taxon>
    </lineage>
</organism>